<sequence length="195" mass="21700">MPIGVPKVPFRLPGEPSAQWVDLYNRLYRERVLFLCQDLDDELANQLIGIMLYLNAEEKSKDLYIYINSPGGSVTCGIAVYDTMNYIKADVTTICVGTAASMASFVLAGGTQGKRIALPHSRIMIHQPEGGSRGQASEVLSESEEVMRIRRQVGKIYAQRTGQPLRRISRDLDRDQFLSAREAKDYGIVDQVATS</sequence>
<comment type="function">
    <text evidence="1">Cleaves peptides in various proteins in a process that requires ATP hydrolysis. Has a chymotrypsin-like activity. Plays a major role in the degradation of misfolded proteins.</text>
</comment>
<comment type="catalytic activity">
    <reaction evidence="1">
        <text>Hydrolysis of proteins to small peptides in the presence of ATP and magnesium. alpha-casein is the usual test substrate. In the absence of ATP, only oligopeptides shorter than five residues are hydrolyzed (such as succinyl-Leu-Tyr-|-NHMec, and Leu-Tyr-Leu-|-Tyr-Trp, in which cleavage of the -Tyr-|-Leu- and -Tyr-|-Trp bonds also occurs).</text>
        <dbReference type="EC" id="3.4.21.92"/>
    </reaction>
</comment>
<comment type="subunit">
    <text>Component of the chloroplastic Clp protease core complex.</text>
</comment>
<comment type="subcellular location">
    <subcellularLocation>
        <location evidence="1">Plastid</location>
        <location evidence="1">Chloroplast stroma</location>
    </subcellularLocation>
</comment>
<comment type="similarity">
    <text evidence="1">Belongs to the peptidase S14 family.</text>
</comment>
<geneLocation type="chloroplast"/>
<evidence type="ECO:0000255" key="1">
    <source>
        <dbReference type="HAMAP-Rule" id="MF_00444"/>
    </source>
</evidence>
<proteinExistence type="inferred from homology"/>
<dbReference type="EC" id="3.4.21.92" evidence="1"/>
<dbReference type="EMBL" id="DQ291132">
    <property type="protein sequence ID" value="ABB81989.1"/>
    <property type="molecule type" value="Genomic_DNA"/>
</dbReference>
<dbReference type="RefSeq" id="YP_635828.1">
    <property type="nucleotide sequence ID" value="NC_008099.1"/>
</dbReference>
<dbReference type="SMR" id="Q20F17"/>
<dbReference type="MEROPS" id="S14.002"/>
<dbReference type="GeneID" id="4100165"/>
<dbReference type="GO" id="GO:0009570">
    <property type="term" value="C:chloroplast stroma"/>
    <property type="evidence" value="ECO:0007669"/>
    <property type="project" value="UniProtKB-SubCell"/>
</dbReference>
<dbReference type="GO" id="GO:0009368">
    <property type="term" value="C:endopeptidase Clp complex"/>
    <property type="evidence" value="ECO:0007669"/>
    <property type="project" value="TreeGrafter"/>
</dbReference>
<dbReference type="GO" id="GO:0004176">
    <property type="term" value="F:ATP-dependent peptidase activity"/>
    <property type="evidence" value="ECO:0007669"/>
    <property type="project" value="InterPro"/>
</dbReference>
<dbReference type="GO" id="GO:0051117">
    <property type="term" value="F:ATPase binding"/>
    <property type="evidence" value="ECO:0007669"/>
    <property type="project" value="TreeGrafter"/>
</dbReference>
<dbReference type="GO" id="GO:0004252">
    <property type="term" value="F:serine-type endopeptidase activity"/>
    <property type="evidence" value="ECO:0007669"/>
    <property type="project" value="UniProtKB-UniRule"/>
</dbReference>
<dbReference type="GO" id="GO:0006515">
    <property type="term" value="P:protein quality control for misfolded or incompletely synthesized proteins"/>
    <property type="evidence" value="ECO:0007669"/>
    <property type="project" value="TreeGrafter"/>
</dbReference>
<dbReference type="CDD" id="cd07017">
    <property type="entry name" value="S14_ClpP_2"/>
    <property type="match status" value="1"/>
</dbReference>
<dbReference type="FunFam" id="3.90.226.10:FF:000002">
    <property type="entry name" value="ATP-dependent Clp protease proteolytic subunit"/>
    <property type="match status" value="1"/>
</dbReference>
<dbReference type="Gene3D" id="3.90.226.10">
    <property type="entry name" value="2-enoyl-CoA Hydratase, Chain A, domain 1"/>
    <property type="match status" value="1"/>
</dbReference>
<dbReference type="HAMAP" id="MF_00444">
    <property type="entry name" value="ClpP"/>
    <property type="match status" value="1"/>
</dbReference>
<dbReference type="InterPro" id="IPR001907">
    <property type="entry name" value="ClpP"/>
</dbReference>
<dbReference type="InterPro" id="IPR029045">
    <property type="entry name" value="ClpP/crotonase-like_dom_sf"/>
</dbReference>
<dbReference type="InterPro" id="IPR023562">
    <property type="entry name" value="ClpP/TepA"/>
</dbReference>
<dbReference type="InterPro" id="IPR033135">
    <property type="entry name" value="ClpP_His_AS"/>
</dbReference>
<dbReference type="InterPro" id="IPR018215">
    <property type="entry name" value="ClpP_Ser_AS"/>
</dbReference>
<dbReference type="NCBIfam" id="NF001368">
    <property type="entry name" value="PRK00277.1"/>
    <property type="match status" value="1"/>
</dbReference>
<dbReference type="PANTHER" id="PTHR10381">
    <property type="entry name" value="ATP-DEPENDENT CLP PROTEASE PROTEOLYTIC SUBUNIT"/>
    <property type="match status" value="1"/>
</dbReference>
<dbReference type="PANTHER" id="PTHR10381:SF15">
    <property type="entry name" value="CHLOROPLASTIC ATP-DEPENDENT CLP PROTEASE PROTEOLYTIC SUBUNIT 1"/>
    <property type="match status" value="1"/>
</dbReference>
<dbReference type="Pfam" id="PF00574">
    <property type="entry name" value="CLP_protease"/>
    <property type="match status" value="1"/>
</dbReference>
<dbReference type="PRINTS" id="PR00127">
    <property type="entry name" value="CLPPROTEASEP"/>
</dbReference>
<dbReference type="SUPFAM" id="SSF52096">
    <property type="entry name" value="ClpP/crotonase"/>
    <property type="match status" value="1"/>
</dbReference>
<dbReference type="PROSITE" id="PS00382">
    <property type="entry name" value="CLP_PROTEASE_HIS"/>
    <property type="match status" value="1"/>
</dbReference>
<dbReference type="PROSITE" id="PS00381">
    <property type="entry name" value="CLP_PROTEASE_SER"/>
    <property type="match status" value="1"/>
</dbReference>
<keyword id="KW-0150">Chloroplast</keyword>
<keyword id="KW-0378">Hydrolase</keyword>
<keyword id="KW-0934">Plastid</keyword>
<keyword id="KW-0645">Protease</keyword>
<keyword id="KW-0720">Serine protease</keyword>
<name>CLPP_OLTVI</name>
<protein>
    <recommendedName>
        <fullName evidence="1">ATP-dependent Clp protease proteolytic subunit</fullName>
        <ecNumber evidence="1">3.4.21.92</ecNumber>
    </recommendedName>
    <alternativeName>
        <fullName evidence="1">Endopeptidase Clp</fullName>
    </alternativeName>
</protein>
<reference key="1">
    <citation type="journal article" date="2006" name="BMC Biol.">
        <title>The complete chloroplast DNA sequence of the green alga Oltmannsiellopsis viridis reveals a distinctive quadripartite architecture in the chloroplast genome of early diverging ulvophytes.</title>
        <authorList>
            <person name="Pombert J.-F."/>
            <person name="Lemieux C."/>
            <person name="Turmel M."/>
        </authorList>
    </citation>
    <scope>NUCLEOTIDE SEQUENCE [LARGE SCALE GENOMIC DNA]</scope>
</reference>
<accession>Q20F17</accession>
<organism>
    <name type="scientific">Oltmannsiellopsis viridis</name>
    <name type="common">Marine flagellate</name>
    <name type="synonym">Oltmannsiella viridis</name>
    <dbReference type="NCBI Taxonomy" id="51324"/>
    <lineage>
        <taxon>Eukaryota</taxon>
        <taxon>Viridiplantae</taxon>
        <taxon>Chlorophyta</taxon>
        <taxon>Ulvophyceae</taxon>
        <taxon>Oltmannsiellopsidales</taxon>
        <taxon>Oltmannsiellopsidaceae</taxon>
        <taxon>Oltmannsiellopsis</taxon>
    </lineage>
</organism>
<feature type="chain" id="PRO_0000275294" description="ATP-dependent Clp protease proteolytic subunit">
    <location>
        <begin position="1"/>
        <end position="195"/>
    </location>
</feature>
<feature type="active site" description="Nucleophile" evidence="1">
    <location>
        <position position="101"/>
    </location>
</feature>
<feature type="active site" evidence="1">
    <location>
        <position position="126"/>
    </location>
</feature>
<gene>
    <name evidence="1" type="primary">clpP</name>
</gene>